<protein>
    <recommendedName>
        <fullName>Probable small nuclear ribonucleoprotein Sm D2</fullName>
        <shortName>Sm-D2</shortName>
    </recommendedName>
    <alternativeName>
        <fullName>snRNP core protein D2</fullName>
    </alternativeName>
</protein>
<proteinExistence type="inferred from homology"/>
<sequence>MSRMNDETMEDKPDDSNGPLSILMDSVNNNTQVLINVRNNKKLLGRVRAFDRHCNMVLENVKEIWTEVPKTAKGKKKAKPINKDRFISKMFLRGDSVILVLKNPLGAPPQAN</sequence>
<accession>Q54NC5</accession>
<reference key="1">
    <citation type="journal article" date="2005" name="Nature">
        <title>The genome of the social amoeba Dictyostelium discoideum.</title>
        <authorList>
            <person name="Eichinger L."/>
            <person name="Pachebat J.A."/>
            <person name="Gloeckner G."/>
            <person name="Rajandream M.A."/>
            <person name="Sucgang R."/>
            <person name="Berriman M."/>
            <person name="Song J."/>
            <person name="Olsen R."/>
            <person name="Szafranski K."/>
            <person name="Xu Q."/>
            <person name="Tunggal B."/>
            <person name="Kummerfeld S."/>
            <person name="Madera M."/>
            <person name="Konfortov B.A."/>
            <person name="Rivero F."/>
            <person name="Bankier A.T."/>
            <person name="Lehmann R."/>
            <person name="Hamlin N."/>
            <person name="Davies R."/>
            <person name="Gaudet P."/>
            <person name="Fey P."/>
            <person name="Pilcher K."/>
            <person name="Chen G."/>
            <person name="Saunders D."/>
            <person name="Sodergren E.J."/>
            <person name="Davis P."/>
            <person name="Kerhornou A."/>
            <person name="Nie X."/>
            <person name="Hall N."/>
            <person name="Anjard C."/>
            <person name="Hemphill L."/>
            <person name="Bason N."/>
            <person name="Farbrother P."/>
            <person name="Desany B."/>
            <person name="Just E."/>
            <person name="Morio T."/>
            <person name="Rost R."/>
            <person name="Churcher C.M."/>
            <person name="Cooper J."/>
            <person name="Haydock S."/>
            <person name="van Driessche N."/>
            <person name="Cronin A."/>
            <person name="Goodhead I."/>
            <person name="Muzny D.M."/>
            <person name="Mourier T."/>
            <person name="Pain A."/>
            <person name="Lu M."/>
            <person name="Harper D."/>
            <person name="Lindsay R."/>
            <person name="Hauser H."/>
            <person name="James K.D."/>
            <person name="Quiles M."/>
            <person name="Madan Babu M."/>
            <person name="Saito T."/>
            <person name="Buchrieser C."/>
            <person name="Wardroper A."/>
            <person name="Felder M."/>
            <person name="Thangavelu M."/>
            <person name="Johnson D."/>
            <person name="Knights A."/>
            <person name="Loulseged H."/>
            <person name="Mungall K.L."/>
            <person name="Oliver K."/>
            <person name="Price C."/>
            <person name="Quail M.A."/>
            <person name="Urushihara H."/>
            <person name="Hernandez J."/>
            <person name="Rabbinowitsch E."/>
            <person name="Steffen D."/>
            <person name="Sanders M."/>
            <person name="Ma J."/>
            <person name="Kohara Y."/>
            <person name="Sharp S."/>
            <person name="Simmonds M.N."/>
            <person name="Spiegler S."/>
            <person name="Tivey A."/>
            <person name="Sugano S."/>
            <person name="White B."/>
            <person name="Walker D."/>
            <person name="Woodward J.R."/>
            <person name="Winckler T."/>
            <person name="Tanaka Y."/>
            <person name="Shaulsky G."/>
            <person name="Schleicher M."/>
            <person name="Weinstock G.M."/>
            <person name="Rosenthal A."/>
            <person name="Cox E.C."/>
            <person name="Chisholm R.L."/>
            <person name="Gibbs R.A."/>
            <person name="Loomis W.F."/>
            <person name="Platzer M."/>
            <person name="Kay R.R."/>
            <person name="Williams J.G."/>
            <person name="Dear P.H."/>
            <person name="Noegel A.A."/>
            <person name="Barrell B.G."/>
            <person name="Kuspa A."/>
        </authorList>
    </citation>
    <scope>NUCLEOTIDE SEQUENCE [LARGE SCALE GENOMIC DNA]</scope>
    <source>
        <strain>AX4</strain>
    </source>
</reference>
<keyword id="KW-0963">Cytoplasm</keyword>
<keyword id="KW-0507">mRNA processing</keyword>
<keyword id="KW-0508">mRNA splicing</keyword>
<keyword id="KW-0539">Nucleus</keyword>
<keyword id="KW-1185">Reference proteome</keyword>
<keyword id="KW-0687">Ribonucleoprotein</keyword>
<keyword id="KW-0747">Spliceosome</keyword>
<evidence type="ECO:0000250" key="1">
    <source>
        <dbReference type="UniProtKB" id="P62316"/>
    </source>
</evidence>
<evidence type="ECO:0000255" key="2">
    <source>
        <dbReference type="PROSITE-ProRule" id="PRU01346"/>
    </source>
</evidence>
<evidence type="ECO:0000256" key="3">
    <source>
        <dbReference type="SAM" id="MobiDB-lite"/>
    </source>
</evidence>
<evidence type="ECO:0000305" key="4"/>
<organism>
    <name type="scientific">Dictyostelium discoideum</name>
    <name type="common">Social amoeba</name>
    <dbReference type="NCBI Taxonomy" id="44689"/>
    <lineage>
        <taxon>Eukaryota</taxon>
        <taxon>Amoebozoa</taxon>
        <taxon>Evosea</taxon>
        <taxon>Eumycetozoa</taxon>
        <taxon>Dictyostelia</taxon>
        <taxon>Dictyosteliales</taxon>
        <taxon>Dictyosteliaceae</taxon>
        <taxon>Dictyostelium</taxon>
    </lineage>
</organism>
<name>SMD2_DICDI</name>
<feature type="chain" id="PRO_0000328300" description="Probable small nuclear ribonucleoprotein Sm D2">
    <location>
        <begin position="1"/>
        <end position="112"/>
    </location>
</feature>
<feature type="domain" description="Sm" evidence="2">
    <location>
        <begin position="20"/>
        <end position="106"/>
    </location>
</feature>
<feature type="region of interest" description="Disordered" evidence="3">
    <location>
        <begin position="1"/>
        <end position="23"/>
    </location>
</feature>
<feature type="compositionally biased region" description="Basic and acidic residues" evidence="3">
    <location>
        <begin position="1"/>
        <end position="15"/>
    </location>
</feature>
<gene>
    <name type="primary">snrpd2</name>
    <name type="ORF">DDB_G0285395</name>
</gene>
<dbReference type="EMBL" id="AAFI02000079">
    <property type="protein sequence ID" value="EAL64772.1"/>
    <property type="molecule type" value="Genomic_DNA"/>
</dbReference>
<dbReference type="RefSeq" id="XP_638255.1">
    <property type="nucleotide sequence ID" value="XM_633163.1"/>
</dbReference>
<dbReference type="SMR" id="Q54NC5"/>
<dbReference type="FunCoup" id="Q54NC5">
    <property type="interactions" value="1105"/>
</dbReference>
<dbReference type="STRING" id="44689.Q54NC5"/>
<dbReference type="PaxDb" id="44689-DDB0233193"/>
<dbReference type="EnsemblProtists" id="EAL64772">
    <property type="protein sequence ID" value="EAL64772"/>
    <property type="gene ID" value="DDB_G0285395"/>
</dbReference>
<dbReference type="GeneID" id="8625063"/>
<dbReference type="KEGG" id="ddi:DDB_G0285395"/>
<dbReference type="dictyBase" id="DDB_G0285395">
    <property type="gene designation" value="snrpD2"/>
</dbReference>
<dbReference type="VEuPathDB" id="AmoebaDB:DDB_G0285395"/>
<dbReference type="eggNOG" id="KOG3459">
    <property type="taxonomic scope" value="Eukaryota"/>
</dbReference>
<dbReference type="HOGENOM" id="CLU_076902_2_1_1"/>
<dbReference type="InParanoid" id="Q54NC5"/>
<dbReference type="OMA" id="DVKEMWT"/>
<dbReference type="PhylomeDB" id="Q54NC5"/>
<dbReference type="Reactome" id="R-DDI-72163">
    <property type="pathway name" value="mRNA Splicing - Major Pathway"/>
</dbReference>
<dbReference type="PRO" id="PR:Q54NC5"/>
<dbReference type="Proteomes" id="UP000002195">
    <property type="component" value="Chromosome 4"/>
</dbReference>
<dbReference type="GO" id="GO:0071013">
    <property type="term" value="C:catalytic step 2 spliceosome"/>
    <property type="evidence" value="ECO:0000318"/>
    <property type="project" value="GO_Central"/>
</dbReference>
<dbReference type="GO" id="GO:0005829">
    <property type="term" value="C:cytosol"/>
    <property type="evidence" value="ECO:0007669"/>
    <property type="project" value="UniProtKB-SubCell"/>
</dbReference>
<dbReference type="GO" id="GO:0034715">
    <property type="term" value="C:pICln-Sm protein complex"/>
    <property type="evidence" value="ECO:0000318"/>
    <property type="project" value="GO_Central"/>
</dbReference>
<dbReference type="GO" id="GO:0071011">
    <property type="term" value="C:precatalytic spliceosome"/>
    <property type="evidence" value="ECO:0000318"/>
    <property type="project" value="GO_Central"/>
</dbReference>
<dbReference type="GO" id="GO:0030532">
    <property type="term" value="C:small nuclear ribonucleoprotein complex"/>
    <property type="evidence" value="ECO:0000250"/>
    <property type="project" value="UniProtKB"/>
</dbReference>
<dbReference type="GO" id="GO:0005685">
    <property type="term" value="C:U1 snRNP"/>
    <property type="evidence" value="ECO:0000250"/>
    <property type="project" value="UniProtKB"/>
</dbReference>
<dbReference type="GO" id="GO:0005686">
    <property type="term" value="C:U2 snRNP"/>
    <property type="evidence" value="ECO:0000318"/>
    <property type="project" value="GO_Central"/>
</dbReference>
<dbReference type="GO" id="GO:0005687">
    <property type="term" value="C:U4 snRNP"/>
    <property type="evidence" value="ECO:0000250"/>
    <property type="project" value="UniProtKB"/>
</dbReference>
<dbReference type="GO" id="GO:0046540">
    <property type="term" value="C:U4/U6 x U5 tri-snRNP complex"/>
    <property type="evidence" value="ECO:0000318"/>
    <property type="project" value="GO_Central"/>
</dbReference>
<dbReference type="GO" id="GO:0005682">
    <property type="term" value="C:U5 snRNP"/>
    <property type="evidence" value="ECO:0000318"/>
    <property type="project" value="GO_Central"/>
</dbReference>
<dbReference type="GO" id="GO:0003723">
    <property type="term" value="F:RNA binding"/>
    <property type="evidence" value="ECO:0007669"/>
    <property type="project" value="InterPro"/>
</dbReference>
<dbReference type="GO" id="GO:0000398">
    <property type="term" value="P:mRNA splicing, via spliceosome"/>
    <property type="evidence" value="ECO:0000250"/>
    <property type="project" value="UniProtKB"/>
</dbReference>
<dbReference type="GO" id="GO:0000387">
    <property type="term" value="P:spliceosomal snRNP assembly"/>
    <property type="evidence" value="ECO:0000318"/>
    <property type="project" value="GO_Central"/>
</dbReference>
<dbReference type="CDD" id="cd01720">
    <property type="entry name" value="Sm_D2"/>
    <property type="match status" value="1"/>
</dbReference>
<dbReference type="FunFam" id="2.30.30.100:FF:000020">
    <property type="entry name" value="Small nuclear ribonucleoprotein Sm D2"/>
    <property type="match status" value="1"/>
</dbReference>
<dbReference type="Gene3D" id="2.30.30.100">
    <property type="match status" value="1"/>
</dbReference>
<dbReference type="InterPro" id="IPR010920">
    <property type="entry name" value="LSM_dom_sf"/>
</dbReference>
<dbReference type="InterPro" id="IPR047575">
    <property type="entry name" value="Sm"/>
</dbReference>
<dbReference type="InterPro" id="IPR027248">
    <property type="entry name" value="Sm_D2"/>
</dbReference>
<dbReference type="InterPro" id="IPR001163">
    <property type="entry name" value="Sm_dom_euk/arc"/>
</dbReference>
<dbReference type="PANTHER" id="PTHR12777">
    <property type="entry name" value="SMALL NUCLEAR RIBONUCLEOPROTEIN SM D2"/>
    <property type="match status" value="1"/>
</dbReference>
<dbReference type="Pfam" id="PF01423">
    <property type="entry name" value="LSM"/>
    <property type="match status" value="1"/>
</dbReference>
<dbReference type="SMART" id="SM00651">
    <property type="entry name" value="Sm"/>
    <property type="match status" value="1"/>
</dbReference>
<dbReference type="SUPFAM" id="SSF50182">
    <property type="entry name" value="Sm-like ribonucleoproteins"/>
    <property type="match status" value="1"/>
</dbReference>
<dbReference type="PROSITE" id="PS52002">
    <property type="entry name" value="SM"/>
    <property type="match status" value="1"/>
</dbReference>
<comment type="function">
    <text evidence="1">Plays a role in pre-mRNA splicing as a core component of the spliceosomal U1, U2, U4 and U5 small nuclear ribonucleoproteins (snRNPs), the building blocks of the spliceosome.</text>
</comment>
<comment type="subcellular location">
    <subcellularLocation>
        <location evidence="1">Nucleus</location>
    </subcellularLocation>
    <subcellularLocation>
        <location evidence="1">Cytoplasm</location>
        <location evidence="1">Cytosol</location>
    </subcellularLocation>
</comment>
<comment type="similarity">
    <text evidence="4">Belongs to the snRNP core protein family.</text>
</comment>